<keyword id="KW-0021">Allosteric enzyme</keyword>
<keyword id="KW-0963">Cytoplasm</keyword>
<keyword id="KW-0520">NAD</keyword>
<keyword id="KW-0560">Oxidoreductase</keyword>
<keyword id="KW-0597">Phosphoprotein</keyword>
<reference key="1">
    <citation type="journal article" date="1987" name="Biol. Chem. Hoppe-Seyler">
        <title>Structure and function of L-lactate dehydrogenases from thermophilic and mesophilic bacteria, VI. Nucleotide sequences of lactate dehydrogenase genes from the thermophilic bacteria Bacillus stearothermophilus, B. caldolyticus and B. caldotenax.</title>
        <authorList>
            <person name="Zuelli F."/>
            <person name="Weber H."/>
            <person name="Zuber H."/>
        </authorList>
    </citation>
    <scope>NUCLEOTIDE SEQUENCE [GENOMIC DNA]</scope>
</reference>
<reference key="2">
    <citation type="journal article" date="1987" name="Eur. J. Biochem.">
        <title>Amino acid sequence of the L-lactate dehydrogenase of Bacillus caldotenax deduced from the nucleotide sequence of the cloned gene.</title>
        <authorList>
            <person name="Barstow D.A."/>
            <person name="Murphy J.P."/>
            <person name="Sharman A.F."/>
            <person name="Clarke A.R."/>
            <person name="Holbrook J.J."/>
            <person name="Atkinson T."/>
        </authorList>
    </citation>
    <scope>NUCLEOTIDE SEQUENCE [GENOMIC DNA]</scope>
</reference>
<evidence type="ECO:0000255" key="1">
    <source>
        <dbReference type="HAMAP-Rule" id="MF_00488"/>
    </source>
</evidence>
<evidence type="ECO:0000305" key="2"/>
<dbReference type="EC" id="1.1.1.27" evidence="1"/>
<dbReference type="EMBL" id="M19395">
    <property type="protein sequence ID" value="AAA22565.1"/>
    <property type="molecule type" value="Genomic_DNA"/>
</dbReference>
<dbReference type="EMBL" id="M28336">
    <property type="protein sequence ID" value="AAA22563.1"/>
    <property type="molecule type" value="Genomic_DNA"/>
</dbReference>
<dbReference type="PIR" id="S00019">
    <property type="entry name" value="S00019"/>
</dbReference>
<dbReference type="SMR" id="P10655"/>
<dbReference type="UniPathway" id="UPA00554">
    <property type="reaction ID" value="UER00611"/>
</dbReference>
<dbReference type="GO" id="GO:0005737">
    <property type="term" value="C:cytoplasm"/>
    <property type="evidence" value="ECO:0007669"/>
    <property type="project" value="UniProtKB-SubCell"/>
</dbReference>
<dbReference type="GO" id="GO:0004459">
    <property type="term" value="F:L-lactate dehydrogenase activity"/>
    <property type="evidence" value="ECO:0007669"/>
    <property type="project" value="UniProtKB-UniRule"/>
</dbReference>
<dbReference type="GO" id="GO:0006096">
    <property type="term" value="P:glycolytic process"/>
    <property type="evidence" value="ECO:0007669"/>
    <property type="project" value="UniProtKB-UniRule"/>
</dbReference>
<dbReference type="GO" id="GO:0006089">
    <property type="term" value="P:lactate metabolic process"/>
    <property type="evidence" value="ECO:0007669"/>
    <property type="project" value="TreeGrafter"/>
</dbReference>
<dbReference type="CDD" id="cd05291">
    <property type="entry name" value="HicDH_like"/>
    <property type="match status" value="1"/>
</dbReference>
<dbReference type="FunFam" id="3.40.50.720:FF:000018">
    <property type="entry name" value="Malate dehydrogenase"/>
    <property type="match status" value="1"/>
</dbReference>
<dbReference type="Gene3D" id="3.90.110.10">
    <property type="entry name" value="Lactate dehydrogenase/glycoside hydrolase, family 4, C-terminal"/>
    <property type="match status" value="1"/>
</dbReference>
<dbReference type="Gene3D" id="3.40.50.720">
    <property type="entry name" value="NAD(P)-binding Rossmann-like Domain"/>
    <property type="match status" value="1"/>
</dbReference>
<dbReference type="HAMAP" id="MF_00488">
    <property type="entry name" value="Lactate_dehydrog"/>
    <property type="match status" value="1"/>
</dbReference>
<dbReference type="InterPro" id="IPR001557">
    <property type="entry name" value="L-lactate/malate_DH"/>
</dbReference>
<dbReference type="InterPro" id="IPR011304">
    <property type="entry name" value="L-lactate_DH"/>
</dbReference>
<dbReference type="InterPro" id="IPR018177">
    <property type="entry name" value="L-lactate_DH_AS"/>
</dbReference>
<dbReference type="InterPro" id="IPR022383">
    <property type="entry name" value="Lactate/malate_DH_C"/>
</dbReference>
<dbReference type="InterPro" id="IPR001236">
    <property type="entry name" value="Lactate/malate_DH_N"/>
</dbReference>
<dbReference type="InterPro" id="IPR015955">
    <property type="entry name" value="Lactate_DH/Glyco_Ohase_4_C"/>
</dbReference>
<dbReference type="InterPro" id="IPR036291">
    <property type="entry name" value="NAD(P)-bd_dom_sf"/>
</dbReference>
<dbReference type="NCBIfam" id="TIGR01771">
    <property type="entry name" value="L-LDH-NAD"/>
    <property type="match status" value="1"/>
</dbReference>
<dbReference type="NCBIfam" id="NF000824">
    <property type="entry name" value="PRK00066.1"/>
    <property type="match status" value="1"/>
</dbReference>
<dbReference type="NCBIfam" id="NF004863">
    <property type="entry name" value="PRK06223.1"/>
    <property type="match status" value="1"/>
</dbReference>
<dbReference type="PANTHER" id="PTHR43128">
    <property type="entry name" value="L-2-HYDROXYCARBOXYLATE DEHYDROGENASE (NAD(P)(+))"/>
    <property type="match status" value="1"/>
</dbReference>
<dbReference type="PANTHER" id="PTHR43128:SF16">
    <property type="entry name" value="L-LACTATE DEHYDROGENASE"/>
    <property type="match status" value="1"/>
</dbReference>
<dbReference type="Pfam" id="PF02866">
    <property type="entry name" value="Ldh_1_C"/>
    <property type="match status" value="1"/>
</dbReference>
<dbReference type="Pfam" id="PF00056">
    <property type="entry name" value="Ldh_1_N"/>
    <property type="match status" value="1"/>
</dbReference>
<dbReference type="PIRSF" id="PIRSF000102">
    <property type="entry name" value="Lac_mal_DH"/>
    <property type="match status" value="1"/>
</dbReference>
<dbReference type="PRINTS" id="PR00086">
    <property type="entry name" value="LLDHDRGNASE"/>
</dbReference>
<dbReference type="SUPFAM" id="SSF56327">
    <property type="entry name" value="LDH C-terminal domain-like"/>
    <property type="match status" value="1"/>
</dbReference>
<dbReference type="SUPFAM" id="SSF51735">
    <property type="entry name" value="NAD(P)-binding Rossmann-fold domains"/>
    <property type="match status" value="1"/>
</dbReference>
<dbReference type="PROSITE" id="PS00064">
    <property type="entry name" value="L_LDH"/>
    <property type="match status" value="1"/>
</dbReference>
<organism>
    <name type="scientific">Bacillus caldotenax</name>
    <dbReference type="NCBI Taxonomy" id="1395"/>
    <lineage>
        <taxon>Bacteria</taxon>
        <taxon>Bacillati</taxon>
        <taxon>Bacillota</taxon>
        <taxon>Bacilli</taxon>
        <taxon>Bacillales</taxon>
        <taxon>Anoxybacillaceae</taxon>
        <taxon>Geobacillus</taxon>
        <taxon>Geobacillus thermoleovorans group</taxon>
    </lineage>
</organism>
<gene>
    <name evidence="1" type="primary">ldh</name>
</gene>
<proteinExistence type="inferred from homology"/>
<name>LDH_BACCA</name>
<accession>P10655</accession>
<feature type="chain" id="PRO_0000168316" description="L-lactate dehydrogenase">
    <location>
        <begin position="1"/>
        <end position="317"/>
    </location>
</feature>
<feature type="active site" description="Proton acceptor" evidence="1">
    <location>
        <position position="179"/>
    </location>
</feature>
<feature type="binding site" evidence="1">
    <location>
        <position position="17"/>
    </location>
    <ligand>
        <name>NAD(+)</name>
        <dbReference type="ChEBI" id="CHEBI:57540"/>
    </ligand>
</feature>
<feature type="binding site" evidence="1">
    <location>
        <position position="38"/>
    </location>
    <ligand>
        <name>NAD(+)</name>
        <dbReference type="ChEBI" id="CHEBI:57540"/>
    </ligand>
</feature>
<feature type="binding site" evidence="1">
    <location>
        <position position="43"/>
    </location>
    <ligand>
        <name>NAD(+)</name>
        <dbReference type="ChEBI" id="CHEBI:57540"/>
    </ligand>
</feature>
<feature type="binding site" evidence="1">
    <location>
        <position position="69"/>
    </location>
    <ligand>
        <name>NAD(+)</name>
        <dbReference type="ChEBI" id="CHEBI:57540"/>
    </ligand>
</feature>
<feature type="binding site" evidence="1">
    <location>
        <begin position="83"/>
        <end position="84"/>
    </location>
    <ligand>
        <name>NAD(+)</name>
        <dbReference type="ChEBI" id="CHEBI:57540"/>
    </ligand>
</feature>
<feature type="binding site" evidence="1">
    <location>
        <position position="86"/>
    </location>
    <ligand>
        <name>substrate</name>
    </ligand>
</feature>
<feature type="binding site" evidence="1">
    <location>
        <position position="92"/>
    </location>
    <ligand>
        <name>substrate</name>
    </ligand>
</feature>
<feature type="binding site" evidence="1">
    <location>
        <position position="105"/>
    </location>
    <ligand>
        <name>NAD(+)</name>
        <dbReference type="ChEBI" id="CHEBI:57540"/>
    </ligand>
</feature>
<feature type="binding site" evidence="1">
    <location>
        <begin position="122"/>
        <end position="124"/>
    </location>
    <ligand>
        <name>NAD(+)</name>
        <dbReference type="ChEBI" id="CHEBI:57540"/>
    </ligand>
</feature>
<feature type="binding site" evidence="1">
    <location>
        <begin position="124"/>
        <end position="127"/>
    </location>
    <ligand>
        <name>substrate</name>
    </ligand>
</feature>
<feature type="binding site" evidence="1">
    <location>
        <position position="147"/>
    </location>
    <ligand>
        <name>NAD(+)</name>
        <dbReference type="ChEBI" id="CHEBI:57540"/>
    </ligand>
</feature>
<feature type="binding site" evidence="1">
    <location>
        <begin position="152"/>
        <end position="155"/>
    </location>
    <ligand>
        <name>substrate</name>
    </ligand>
</feature>
<feature type="binding site" evidence="1">
    <location>
        <position position="157"/>
    </location>
    <ligand>
        <name>beta-D-fructose 1,6-bisphosphate</name>
        <dbReference type="ChEBI" id="CHEBI:32966"/>
        <note>allosteric activator</note>
    </ligand>
</feature>
<feature type="binding site" evidence="1">
    <location>
        <position position="172"/>
    </location>
    <ligand>
        <name>beta-D-fructose 1,6-bisphosphate</name>
        <dbReference type="ChEBI" id="CHEBI:32966"/>
        <note>allosteric activator</note>
    </ligand>
</feature>
<feature type="binding site" evidence="1">
    <location>
        <position position="233"/>
    </location>
    <ligand>
        <name>substrate</name>
    </ligand>
</feature>
<feature type="modified residue" description="Phosphotyrosine" evidence="1">
    <location>
        <position position="224"/>
    </location>
</feature>
<feature type="sequence conflict" description="In Ref. 2; AAA22563." evidence="2" ref="2">
    <original>L</original>
    <variation>F</variation>
    <location>
        <position position="51"/>
    </location>
</feature>
<feature type="sequence conflict" description="In Ref. 2; AAA22563." evidence="2" ref="2">
    <original>S</original>
    <variation>G</variation>
    <location>
        <position position="138"/>
    </location>
</feature>
<comment type="function">
    <text evidence="1">Catalyzes the conversion of lactate to pyruvate.</text>
</comment>
<comment type="catalytic activity">
    <reaction evidence="1">
        <text>(S)-lactate + NAD(+) = pyruvate + NADH + H(+)</text>
        <dbReference type="Rhea" id="RHEA:23444"/>
        <dbReference type="ChEBI" id="CHEBI:15361"/>
        <dbReference type="ChEBI" id="CHEBI:15378"/>
        <dbReference type="ChEBI" id="CHEBI:16651"/>
        <dbReference type="ChEBI" id="CHEBI:57540"/>
        <dbReference type="ChEBI" id="CHEBI:57945"/>
        <dbReference type="EC" id="1.1.1.27"/>
    </reaction>
</comment>
<comment type="activity regulation">
    <text evidence="1">Allosterically activated by fructose 1,6-bisphosphate (FBP).</text>
</comment>
<comment type="pathway">
    <text evidence="1">Fermentation; pyruvate fermentation to lactate; (S)-lactate from pyruvate: step 1/1.</text>
</comment>
<comment type="subunit">
    <text evidence="1">Homotetramer.</text>
</comment>
<comment type="subcellular location">
    <subcellularLocation>
        <location evidence="1">Cytoplasm</location>
    </subcellularLocation>
</comment>
<comment type="similarity">
    <text evidence="1 2">Belongs to the LDH/MDH superfamily. LDH family.</text>
</comment>
<sequence length="317" mass="34848">MKNGRGNRVAVVGTGFVGASYAFALMNQGIADEIVLIDANENKAEGDAMDLNHGKVFAPKPADIWHGDYDDCRDADLVVICAGANQKPGETRLDLVDKNIAIFRSIVESVMASGFQGLFLVATNPVDILTYATWKFSSLPQERVIGSGTILDTARFRFLLGDYFAVAPTNVHAYIIGEHGDTELPVWSQADIGGVPIRKLVESKGEEAQKELERIFVNVRDAAYQIIEKKGATYYGIAMGLARVTRAILHHENAILTVSAYLDGPYGERDVYIGVPAVINRNGIREVIEIELDEEEKKWFHRSAATLKGVLARYFAQ</sequence>
<protein>
    <recommendedName>
        <fullName evidence="1">L-lactate dehydrogenase</fullName>
        <shortName evidence="1">L-LDH</shortName>
        <ecNumber evidence="1">1.1.1.27</ecNumber>
    </recommendedName>
</protein>